<evidence type="ECO:0000250" key="1"/>
<evidence type="ECO:0000250" key="2">
    <source>
        <dbReference type="UniProtKB" id="P24482"/>
    </source>
</evidence>
<evidence type="ECO:0000269" key="3">
    <source>
    </source>
</evidence>
<evidence type="ECO:0000305" key="4"/>
<keyword id="KW-0235">DNA replication</keyword>
<keyword id="KW-0238">DNA-binding</keyword>
<keyword id="KW-0539">Nucleus</keyword>
<keyword id="KW-1185">Reference proteome</keyword>
<feature type="chain" id="PRO_0000071571" description="DNA polymerase epsilon subunit B">
    <location>
        <begin position="1"/>
        <end position="594"/>
    </location>
</feature>
<dbReference type="EMBL" id="CU329671">
    <property type="protein sequence ID" value="CAA21799.1"/>
    <property type="molecule type" value="Genomic_DNA"/>
</dbReference>
<dbReference type="PIR" id="T40808">
    <property type="entry name" value="T40808"/>
</dbReference>
<dbReference type="RefSeq" id="NP_596521.1">
    <property type="nucleotide sequence ID" value="NM_001022442.2"/>
</dbReference>
<dbReference type="SMR" id="O94263"/>
<dbReference type="BioGRID" id="277858">
    <property type="interactions" value="15"/>
</dbReference>
<dbReference type="ComplexPortal" id="CPX-2111">
    <property type="entry name" value="DNA polymerase epsilon complex"/>
</dbReference>
<dbReference type="FunCoup" id="O94263">
    <property type="interactions" value="392"/>
</dbReference>
<dbReference type="IntAct" id="O94263">
    <property type="interactions" value="2"/>
</dbReference>
<dbReference type="MINT" id="O94263"/>
<dbReference type="STRING" id="284812.O94263"/>
<dbReference type="PaxDb" id="4896-SPBP8B7.14c.1"/>
<dbReference type="EnsemblFungi" id="SPBP8B7.14c.1">
    <property type="protein sequence ID" value="SPBP8B7.14c.1:pep"/>
    <property type="gene ID" value="SPBP8B7.14c"/>
</dbReference>
<dbReference type="GeneID" id="2541347"/>
<dbReference type="KEGG" id="spo:2541347"/>
<dbReference type="PomBase" id="SPBP8B7.14c">
    <property type="gene designation" value="dpb2"/>
</dbReference>
<dbReference type="VEuPathDB" id="FungiDB:SPBP8B7.14c"/>
<dbReference type="eggNOG" id="KOG3818">
    <property type="taxonomic scope" value="Eukaryota"/>
</dbReference>
<dbReference type="HOGENOM" id="CLU_010628_1_0_1"/>
<dbReference type="InParanoid" id="O94263"/>
<dbReference type="OMA" id="FFCEGCF"/>
<dbReference type="PhylomeDB" id="O94263"/>
<dbReference type="Reactome" id="R-SPO-110314">
    <property type="pathway name" value="Recognition of DNA damage by PCNA-containing replication complex"/>
</dbReference>
<dbReference type="Reactome" id="R-SPO-5651801">
    <property type="pathway name" value="PCNA-Dependent Long Patch Base Excision Repair"/>
</dbReference>
<dbReference type="Reactome" id="R-SPO-5656169">
    <property type="pathway name" value="Termination of translesion DNA synthesis"/>
</dbReference>
<dbReference type="Reactome" id="R-SPO-5696397">
    <property type="pathway name" value="Gap-filling DNA repair synthesis and ligation in GG-NER"/>
</dbReference>
<dbReference type="Reactome" id="R-SPO-5696400">
    <property type="pathway name" value="Dual Incision in GG-NER"/>
</dbReference>
<dbReference type="Reactome" id="R-SPO-6782135">
    <property type="pathway name" value="Dual incision in TC-NER"/>
</dbReference>
<dbReference type="Reactome" id="R-SPO-6782210">
    <property type="pathway name" value="Gap-filling DNA repair synthesis and ligation in TC-NER"/>
</dbReference>
<dbReference type="Reactome" id="R-SPO-68952">
    <property type="pathway name" value="DNA replication initiation"/>
</dbReference>
<dbReference type="Reactome" id="R-SPO-68962">
    <property type="pathway name" value="Activation of the pre-replicative complex"/>
</dbReference>
<dbReference type="PRO" id="PR:O94263"/>
<dbReference type="Proteomes" id="UP000002485">
    <property type="component" value="Chromosome II"/>
</dbReference>
<dbReference type="GO" id="GO:0000785">
    <property type="term" value="C:chromatin"/>
    <property type="evidence" value="ECO:0000314"/>
    <property type="project" value="PomBase"/>
</dbReference>
<dbReference type="GO" id="GO:0005829">
    <property type="term" value="C:cytosol"/>
    <property type="evidence" value="ECO:0007005"/>
    <property type="project" value="PomBase"/>
</dbReference>
<dbReference type="GO" id="GO:0031261">
    <property type="term" value="C:DNA replication preinitiation complex"/>
    <property type="evidence" value="ECO:0000305"/>
    <property type="project" value="PomBase"/>
</dbReference>
<dbReference type="GO" id="GO:0008622">
    <property type="term" value="C:epsilon DNA polymerase complex"/>
    <property type="evidence" value="ECO:0000266"/>
    <property type="project" value="PomBase"/>
</dbReference>
<dbReference type="GO" id="GO:0043596">
    <property type="term" value="C:nuclear replication fork"/>
    <property type="evidence" value="ECO:0000266"/>
    <property type="project" value="PomBase"/>
</dbReference>
<dbReference type="GO" id="GO:0005634">
    <property type="term" value="C:nucleus"/>
    <property type="evidence" value="ECO:0007005"/>
    <property type="project" value="PomBase"/>
</dbReference>
<dbReference type="GO" id="GO:0003677">
    <property type="term" value="F:DNA binding"/>
    <property type="evidence" value="ECO:0007669"/>
    <property type="project" value="UniProtKB-KW"/>
</dbReference>
<dbReference type="GO" id="GO:0140529">
    <property type="term" value="P:CMG complex assembly"/>
    <property type="evidence" value="ECO:0000315"/>
    <property type="project" value="PomBase"/>
</dbReference>
<dbReference type="GO" id="GO:0006270">
    <property type="term" value="P:DNA replication initiation"/>
    <property type="evidence" value="ECO:0000315"/>
    <property type="project" value="PomBase"/>
</dbReference>
<dbReference type="GO" id="GO:1902983">
    <property type="term" value="P:DNA strand elongation involved in mitotic DNA replication"/>
    <property type="evidence" value="ECO:0000305"/>
    <property type="project" value="PomBase"/>
</dbReference>
<dbReference type="GO" id="GO:0006261">
    <property type="term" value="P:DNA-templated DNA replication"/>
    <property type="evidence" value="ECO:0000318"/>
    <property type="project" value="GO_Central"/>
</dbReference>
<dbReference type="GO" id="GO:0042276">
    <property type="term" value="P:error-prone translesion synthesis"/>
    <property type="evidence" value="ECO:0000318"/>
    <property type="project" value="GO_Central"/>
</dbReference>
<dbReference type="InterPro" id="IPR007185">
    <property type="entry name" value="DNA_pol_a/d/e_bsu"/>
</dbReference>
<dbReference type="InterPro" id="IPR016266">
    <property type="entry name" value="POLE2"/>
</dbReference>
<dbReference type="PANTHER" id="PTHR12708:SF0">
    <property type="entry name" value="DNA POLYMERASE EPSILON SUBUNIT 2"/>
    <property type="match status" value="1"/>
</dbReference>
<dbReference type="PANTHER" id="PTHR12708">
    <property type="entry name" value="DNA POLYMERASE EPSILON SUBUNIT B"/>
    <property type="match status" value="1"/>
</dbReference>
<dbReference type="Pfam" id="PF04042">
    <property type="entry name" value="DNA_pol_E_B"/>
    <property type="match status" value="1"/>
</dbReference>
<comment type="function">
    <text evidence="2">As accessory component of the DNA polymerase epsilon (DNA polymerase II) participates in chromosomal DNA replication.</text>
</comment>
<comment type="subunit">
    <text evidence="1 3">Heterotetramer. Consists of four subunits: pol2, dpb2, dpb3 and dpb4 (By similarity). Interacts with dpb3.</text>
</comment>
<comment type="subcellular location">
    <subcellularLocation>
        <location evidence="1">Nucleus</location>
    </subcellularLocation>
</comment>
<comment type="miscellaneous">
    <text>In eukaryotes there are five DNA polymerases: alpha, beta, gamma, delta, and epsilon which are responsible for different reactions of DNA synthesis.</text>
</comment>
<comment type="similarity">
    <text evidence="4">Belongs to the DNA polymerase epsilon subunit B family.</text>
</comment>
<gene>
    <name type="primary">dpb2</name>
    <name type="ORF">SPBP8B7.14c</name>
</gene>
<reference key="1">
    <citation type="journal article" date="2002" name="Nature">
        <title>The genome sequence of Schizosaccharomyces pombe.</title>
        <authorList>
            <person name="Wood V."/>
            <person name="Gwilliam R."/>
            <person name="Rajandream M.A."/>
            <person name="Lyne M.H."/>
            <person name="Lyne R."/>
            <person name="Stewart A."/>
            <person name="Sgouros J.G."/>
            <person name="Peat N."/>
            <person name="Hayles J."/>
            <person name="Baker S.G."/>
            <person name="Basham D."/>
            <person name="Bowman S."/>
            <person name="Brooks K."/>
            <person name="Brown D."/>
            <person name="Brown S."/>
            <person name="Chillingworth T."/>
            <person name="Churcher C.M."/>
            <person name="Collins M."/>
            <person name="Connor R."/>
            <person name="Cronin A."/>
            <person name="Davis P."/>
            <person name="Feltwell T."/>
            <person name="Fraser A."/>
            <person name="Gentles S."/>
            <person name="Goble A."/>
            <person name="Hamlin N."/>
            <person name="Harris D.E."/>
            <person name="Hidalgo J."/>
            <person name="Hodgson G."/>
            <person name="Holroyd S."/>
            <person name="Hornsby T."/>
            <person name="Howarth S."/>
            <person name="Huckle E.J."/>
            <person name="Hunt S."/>
            <person name="Jagels K."/>
            <person name="James K.D."/>
            <person name="Jones L."/>
            <person name="Jones M."/>
            <person name="Leather S."/>
            <person name="McDonald S."/>
            <person name="McLean J."/>
            <person name="Mooney P."/>
            <person name="Moule S."/>
            <person name="Mungall K.L."/>
            <person name="Murphy L.D."/>
            <person name="Niblett D."/>
            <person name="Odell C."/>
            <person name="Oliver K."/>
            <person name="O'Neil S."/>
            <person name="Pearson D."/>
            <person name="Quail M.A."/>
            <person name="Rabbinowitsch E."/>
            <person name="Rutherford K.M."/>
            <person name="Rutter S."/>
            <person name="Saunders D."/>
            <person name="Seeger K."/>
            <person name="Sharp S."/>
            <person name="Skelton J."/>
            <person name="Simmonds M.N."/>
            <person name="Squares R."/>
            <person name="Squares S."/>
            <person name="Stevens K."/>
            <person name="Taylor K."/>
            <person name="Taylor R.G."/>
            <person name="Tivey A."/>
            <person name="Walsh S.V."/>
            <person name="Warren T."/>
            <person name="Whitehead S."/>
            <person name="Woodward J.R."/>
            <person name="Volckaert G."/>
            <person name="Aert R."/>
            <person name="Robben J."/>
            <person name="Grymonprez B."/>
            <person name="Weltjens I."/>
            <person name="Vanstreels E."/>
            <person name="Rieger M."/>
            <person name="Schaefer M."/>
            <person name="Mueller-Auer S."/>
            <person name="Gabel C."/>
            <person name="Fuchs M."/>
            <person name="Duesterhoeft A."/>
            <person name="Fritzc C."/>
            <person name="Holzer E."/>
            <person name="Moestl D."/>
            <person name="Hilbert H."/>
            <person name="Borzym K."/>
            <person name="Langer I."/>
            <person name="Beck A."/>
            <person name="Lehrach H."/>
            <person name="Reinhardt R."/>
            <person name="Pohl T.M."/>
            <person name="Eger P."/>
            <person name="Zimmermann W."/>
            <person name="Wedler H."/>
            <person name="Wambutt R."/>
            <person name="Purnelle B."/>
            <person name="Goffeau A."/>
            <person name="Cadieu E."/>
            <person name="Dreano S."/>
            <person name="Gloux S."/>
            <person name="Lelaure V."/>
            <person name="Mottier S."/>
            <person name="Galibert F."/>
            <person name="Aves S.J."/>
            <person name="Xiang Z."/>
            <person name="Hunt C."/>
            <person name="Moore K."/>
            <person name="Hurst S.M."/>
            <person name="Lucas M."/>
            <person name="Rochet M."/>
            <person name="Gaillardin C."/>
            <person name="Tallada V.A."/>
            <person name="Garzon A."/>
            <person name="Thode G."/>
            <person name="Daga R.R."/>
            <person name="Cruzado L."/>
            <person name="Jimenez J."/>
            <person name="Sanchez M."/>
            <person name="del Rey F."/>
            <person name="Benito J."/>
            <person name="Dominguez A."/>
            <person name="Revuelta J.L."/>
            <person name="Moreno S."/>
            <person name="Armstrong J."/>
            <person name="Forsburg S.L."/>
            <person name="Cerutti L."/>
            <person name="Lowe T."/>
            <person name="McCombie W.R."/>
            <person name="Paulsen I."/>
            <person name="Potashkin J."/>
            <person name="Shpakovski G.V."/>
            <person name="Ussery D."/>
            <person name="Barrell B.G."/>
            <person name="Nurse P."/>
        </authorList>
    </citation>
    <scope>NUCLEOTIDE SEQUENCE [LARGE SCALE GENOMIC DNA]</scope>
    <source>
        <strain>972 / ATCC 24843</strain>
    </source>
</reference>
<reference key="2">
    <citation type="journal article" date="2004" name="Nucleic Acids Res.">
        <title>Identification and cloning of two putative subunits of DNA polymerase epsilon in fission yeast.</title>
        <authorList>
            <person name="Spiga M.-G."/>
            <person name="D'Urso G."/>
        </authorList>
    </citation>
    <scope>INTERACTION WITH DPB3</scope>
</reference>
<organism>
    <name type="scientific">Schizosaccharomyces pombe (strain 972 / ATCC 24843)</name>
    <name type="common">Fission yeast</name>
    <dbReference type="NCBI Taxonomy" id="284812"/>
    <lineage>
        <taxon>Eukaryota</taxon>
        <taxon>Fungi</taxon>
        <taxon>Dikarya</taxon>
        <taxon>Ascomycota</taxon>
        <taxon>Taphrinomycotina</taxon>
        <taxon>Schizosaccharomycetes</taxon>
        <taxon>Schizosaccharomycetales</taxon>
        <taxon>Schizosaccharomycetaceae</taxon>
        <taxon>Schizosaccharomyces</taxon>
    </lineage>
</organism>
<protein>
    <recommendedName>
        <fullName>DNA polymerase epsilon subunit B</fullName>
    </recommendedName>
    <alternativeName>
        <fullName>DNA polymerase II subunit 2</fullName>
    </alternativeName>
</protein>
<sequence length="594" mass="67224">MNNSITDSVEKKPEQVSFEVQPNALRPVAFHVFTRKYDLNINRDSLQELASFVSKKCGSQWRSQCEPLLDEIAKTWKRVHETQPIVTRPLLIPVLANLNVPHEVRVSSLARVQTLETTGSFLNSSNSEIRETIKNEKYFRVLDAFKMPKFKYDSSRKVFVLSKQSPTLMASASACTDMLNRRFNVVYSRILRNESFQTPSFSGSFSQTGTYQLTPIRNLLGRAGNTFLLFGLLTIAPDGTLWLEDLDSQVQLDVSQAEQGFGLFCPGCLVLVNGQFLSSGLFLVFELGHPPIERRDASLKALNNLDILGLNMDAKQLALLRHAEQAYQSQAFVCISEVHLDNHQTFYALEKIFQKYESSEAVPFCIILCGSFMSSAFHNSGSSIQYKEGFNKLAASLEKFPKICEKTKFIFVPGPNDPWTTNGISLMPKHSIPLHFVNRIQRVCKHTIFASNPCRIIFFSQEVLIYRDDISGRFQRNSLKFGKTPQGTSNINSIPLAEQQVHQQRKLVKTVLDQSHLSPFPSRTRPILWDFDYALSVFPLPSCMGLIDSESSAFDVHYGGCPTFNPGALLLGVHYNWQEVFPVKKEIITHKERI</sequence>
<name>DPB2_SCHPO</name>
<accession>O94263</accession>
<proteinExistence type="evidence at protein level"/>